<evidence type="ECO:0000255" key="1">
    <source>
        <dbReference type="HAMAP-Rule" id="MF_01416"/>
    </source>
</evidence>
<reference key="1">
    <citation type="submission" date="2007-04" db="EMBL/GenBank/DDBJ databases">
        <title>Complete sequence of chromosome of Rhodobacter sphaeroides ATCC 17025.</title>
        <authorList>
            <consortium name="US DOE Joint Genome Institute"/>
            <person name="Copeland A."/>
            <person name="Lucas S."/>
            <person name="Lapidus A."/>
            <person name="Barry K."/>
            <person name="Detter J.C."/>
            <person name="Glavina del Rio T."/>
            <person name="Hammon N."/>
            <person name="Israni S."/>
            <person name="Dalin E."/>
            <person name="Tice H."/>
            <person name="Pitluck S."/>
            <person name="Chertkov O."/>
            <person name="Brettin T."/>
            <person name="Bruce D."/>
            <person name="Han C."/>
            <person name="Schmutz J."/>
            <person name="Larimer F."/>
            <person name="Land M."/>
            <person name="Hauser L."/>
            <person name="Kyrpides N."/>
            <person name="Kim E."/>
            <person name="Richardson P."/>
            <person name="Mackenzie C."/>
            <person name="Choudhary M."/>
            <person name="Donohue T.J."/>
            <person name="Kaplan S."/>
        </authorList>
    </citation>
    <scope>NUCLEOTIDE SEQUENCE [LARGE SCALE GENOMIC DNA]</scope>
    <source>
        <strain>ATCC 17025 / ATH 2.4.3</strain>
    </source>
</reference>
<organism>
    <name type="scientific">Cereibacter sphaeroides (strain ATCC 17025 / ATH 2.4.3)</name>
    <name type="common">Rhodobacter sphaeroides</name>
    <dbReference type="NCBI Taxonomy" id="349102"/>
    <lineage>
        <taxon>Bacteria</taxon>
        <taxon>Pseudomonadati</taxon>
        <taxon>Pseudomonadota</taxon>
        <taxon>Alphaproteobacteria</taxon>
        <taxon>Rhodobacterales</taxon>
        <taxon>Paracoccaceae</taxon>
        <taxon>Cereibacter</taxon>
    </lineage>
</organism>
<protein>
    <recommendedName>
        <fullName evidence="1">ATP synthase subunit delta</fullName>
    </recommendedName>
    <alternativeName>
        <fullName evidence="1">ATP synthase F(1) sector subunit delta</fullName>
    </alternativeName>
    <alternativeName>
        <fullName evidence="1">F-type ATPase subunit delta</fullName>
        <shortName evidence="1">F-ATPase subunit delta</shortName>
    </alternativeName>
</protein>
<gene>
    <name evidence="1" type="primary">atpH</name>
    <name type="ordered locus">Rsph17025_2204</name>
</gene>
<dbReference type="EMBL" id="CP000661">
    <property type="protein sequence ID" value="ABP71094.1"/>
    <property type="molecule type" value="Genomic_DNA"/>
</dbReference>
<dbReference type="SMR" id="A4WUN0"/>
<dbReference type="STRING" id="349102.Rsph17025_2204"/>
<dbReference type="KEGG" id="rsq:Rsph17025_2204"/>
<dbReference type="eggNOG" id="COG0712">
    <property type="taxonomic scope" value="Bacteria"/>
</dbReference>
<dbReference type="HOGENOM" id="CLU_085114_0_1_5"/>
<dbReference type="BioCyc" id="RSPH349102:G1G8M-2272-MONOMER"/>
<dbReference type="GO" id="GO:0005886">
    <property type="term" value="C:plasma membrane"/>
    <property type="evidence" value="ECO:0007669"/>
    <property type="project" value="UniProtKB-SubCell"/>
</dbReference>
<dbReference type="GO" id="GO:0045259">
    <property type="term" value="C:proton-transporting ATP synthase complex"/>
    <property type="evidence" value="ECO:0007669"/>
    <property type="project" value="UniProtKB-KW"/>
</dbReference>
<dbReference type="GO" id="GO:0046933">
    <property type="term" value="F:proton-transporting ATP synthase activity, rotational mechanism"/>
    <property type="evidence" value="ECO:0007669"/>
    <property type="project" value="UniProtKB-UniRule"/>
</dbReference>
<dbReference type="Gene3D" id="1.10.520.20">
    <property type="entry name" value="N-terminal domain of the delta subunit of the F1F0-ATP synthase"/>
    <property type="match status" value="1"/>
</dbReference>
<dbReference type="HAMAP" id="MF_01416">
    <property type="entry name" value="ATP_synth_delta_bact"/>
    <property type="match status" value="1"/>
</dbReference>
<dbReference type="InterPro" id="IPR026015">
    <property type="entry name" value="ATP_synth_OSCP/delta_N_sf"/>
</dbReference>
<dbReference type="InterPro" id="IPR020781">
    <property type="entry name" value="ATPase_OSCP/d_CS"/>
</dbReference>
<dbReference type="InterPro" id="IPR000711">
    <property type="entry name" value="ATPase_OSCP/dsu"/>
</dbReference>
<dbReference type="NCBIfam" id="TIGR01145">
    <property type="entry name" value="ATP_synt_delta"/>
    <property type="match status" value="1"/>
</dbReference>
<dbReference type="NCBIfam" id="NF004406">
    <property type="entry name" value="PRK05758.3-2"/>
    <property type="match status" value="1"/>
</dbReference>
<dbReference type="PANTHER" id="PTHR11910">
    <property type="entry name" value="ATP SYNTHASE DELTA CHAIN"/>
    <property type="match status" value="1"/>
</dbReference>
<dbReference type="Pfam" id="PF00213">
    <property type="entry name" value="OSCP"/>
    <property type="match status" value="1"/>
</dbReference>
<dbReference type="PRINTS" id="PR00125">
    <property type="entry name" value="ATPASEDELTA"/>
</dbReference>
<dbReference type="SUPFAM" id="SSF47928">
    <property type="entry name" value="N-terminal domain of the delta subunit of the F1F0-ATP synthase"/>
    <property type="match status" value="1"/>
</dbReference>
<dbReference type="PROSITE" id="PS00389">
    <property type="entry name" value="ATPASE_DELTA"/>
    <property type="match status" value="1"/>
</dbReference>
<name>ATPD_CERS5</name>
<comment type="function">
    <text evidence="1">F(1)F(0) ATP synthase produces ATP from ADP in the presence of a proton or sodium gradient. F-type ATPases consist of two structural domains, F(1) containing the extramembraneous catalytic core and F(0) containing the membrane proton channel, linked together by a central stalk and a peripheral stalk. During catalysis, ATP synthesis in the catalytic domain of F(1) is coupled via a rotary mechanism of the central stalk subunits to proton translocation.</text>
</comment>
<comment type="function">
    <text evidence="1">This protein is part of the stalk that links CF(0) to CF(1). It either transmits conformational changes from CF(0) to CF(1) or is implicated in proton conduction.</text>
</comment>
<comment type="subunit">
    <text evidence="1">F-type ATPases have 2 components, F(1) - the catalytic core - and F(0) - the membrane proton channel. F(1) has five subunits: alpha(3), beta(3), gamma(1), delta(1), epsilon(1). CF(0) has four main subunits: a(1), b(1), b'(1) and c(10-14). The alpha and beta chains form an alternating ring which encloses part of the gamma chain. F(1) is attached to F(0) by a central stalk formed by the gamma and epsilon chains, while a peripheral stalk is formed by the delta, b and b' chains.</text>
</comment>
<comment type="subcellular location">
    <subcellularLocation>
        <location evidence="1">Cell inner membrane</location>
        <topology evidence="1">Peripheral membrane protein</topology>
    </subcellularLocation>
</comment>
<comment type="similarity">
    <text evidence="1">Belongs to the ATPase delta chain family.</text>
</comment>
<sequence>MSEPASISSGIAARYAAAVFELAKDEGALPALEKDMDALGAAWAESADLRDLATSPVYAREDQQKAIAAIAAKMGLSSLTSNTLALMGSKRRLFVLPQMVADVQNRIATEKGEITAEVTAAAPLSPEQAARLAATLKARAGKDVKLKTTVDESLIGGLVVKLGSSMIDTSVKARLAALQNAMKEVG</sequence>
<accession>A4WUN0</accession>
<keyword id="KW-0066">ATP synthesis</keyword>
<keyword id="KW-0997">Cell inner membrane</keyword>
<keyword id="KW-1003">Cell membrane</keyword>
<keyword id="KW-0139">CF(1)</keyword>
<keyword id="KW-0375">Hydrogen ion transport</keyword>
<keyword id="KW-0406">Ion transport</keyword>
<keyword id="KW-0472">Membrane</keyword>
<keyword id="KW-0813">Transport</keyword>
<feature type="chain" id="PRO_0000371095" description="ATP synthase subunit delta">
    <location>
        <begin position="1"/>
        <end position="186"/>
    </location>
</feature>
<proteinExistence type="inferred from homology"/>